<sequence length="187" mass="20998">MATPEFDLNDIKRRMQGAVASLSKDLGSLRTGRATPSLLDPIQVDAYGSMMPMAQVATVSVPEPRLLSISVWDRSMVTAVEKAIRESDLGLNPQTEGQTIRLRIPEMNEQRRKEMVKVAHKYTEEARVAVRHVRRDGLDHLKKLLKDSAISEDDEKRQATDVQKATDQYIAEIDGVLASKEKEIMQV</sequence>
<reference key="1">
    <citation type="submission" date="2008-03" db="EMBL/GenBank/DDBJ databases">
        <title>Complete sequence of chromosome of Methylobacterium radiotolerans JCM 2831.</title>
        <authorList>
            <consortium name="US DOE Joint Genome Institute"/>
            <person name="Copeland A."/>
            <person name="Lucas S."/>
            <person name="Lapidus A."/>
            <person name="Glavina del Rio T."/>
            <person name="Dalin E."/>
            <person name="Tice H."/>
            <person name="Bruce D."/>
            <person name="Goodwin L."/>
            <person name="Pitluck S."/>
            <person name="Kiss H."/>
            <person name="Brettin T."/>
            <person name="Detter J.C."/>
            <person name="Han C."/>
            <person name="Kuske C.R."/>
            <person name="Schmutz J."/>
            <person name="Larimer F."/>
            <person name="Land M."/>
            <person name="Hauser L."/>
            <person name="Kyrpides N."/>
            <person name="Mikhailova N."/>
            <person name="Marx C.J."/>
            <person name="Richardson P."/>
        </authorList>
    </citation>
    <scope>NUCLEOTIDE SEQUENCE [LARGE SCALE GENOMIC DNA]</scope>
    <source>
        <strain>ATCC 27329 / DSM 1819 / JCM 2831 / NBRC 15690 / NCIMB 10815 / 0-1</strain>
    </source>
</reference>
<keyword id="KW-0963">Cytoplasm</keyword>
<keyword id="KW-0648">Protein biosynthesis</keyword>
<protein>
    <recommendedName>
        <fullName evidence="1">Ribosome-recycling factor</fullName>
        <shortName evidence="1">RRF</shortName>
    </recommendedName>
    <alternativeName>
        <fullName evidence="1">Ribosome-releasing factor</fullName>
    </alternativeName>
</protein>
<proteinExistence type="inferred from homology"/>
<evidence type="ECO:0000255" key="1">
    <source>
        <dbReference type="HAMAP-Rule" id="MF_00040"/>
    </source>
</evidence>
<name>RRF_METRJ</name>
<dbReference type="EMBL" id="CP001001">
    <property type="protein sequence ID" value="ACB25423.1"/>
    <property type="molecule type" value="Genomic_DNA"/>
</dbReference>
<dbReference type="RefSeq" id="WP_012320386.1">
    <property type="nucleotide sequence ID" value="NC_010505.1"/>
</dbReference>
<dbReference type="SMR" id="B1LTQ4"/>
<dbReference type="STRING" id="426355.Mrad2831_3446"/>
<dbReference type="GeneID" id="6139494"/>
<dbReference type="KEGG" id="mrd:Mrad2831_3446"/>
<dbReference type="eggNOG" id="COG0233">
    <property type="taxonomic scope" value="Bacteria"/>
</dbReference>
<dbReference type="HOGENOM" id="CLU_073981_2_0_5"/>
<dbReference type="OrthoDB" id="9804006at2"/>
<dbReference type="Proteomes" id="UP000006589">
    <property type="component" value="Chromosome"/>
</dbReference>
<dbReference type="GO" id="GO:0005829">
    <property type="term" value="C:cytosol"/>
    <property type="evidence" value="ECO:0007669"/>
    <property type="project" value="GOC"/>
</dbReference>
<dbReference type="GO" id="GO:0043023">
    <property type="term" value="F:ribosomal large subunit binding"/>
    <property type="evidence" value="ECO:0007669"/>
    <property type="project" value="TreeGrafter"/>
</dbReference>
<dbReference type="GO" id="GO:0002184">
    <property type="term" value="P:cytoplasmic translational termination"/>
    <property type="evidence" value="ECO:0007669"/>
    <property type="project" value="TreeGrafter"/>
</dbReference>
<dbReference type="CDD" id="cd00520">
    <property type="entry name" value="RRF"/>
    <property type="match status" value="1"/>
</dbReference>
<dbReference type="FunFam" id="1.10.132.20:FF:000001">
    <property type="entry name" value="Ribosome-recycling factor"/>
    <property type="match status" value="1"/>
</dbReference>
<dbReference type="FunFam" id="3.30.1360.40:FF:000001">
    <property type="entry name" value="Ribosome-recycling factor"/>
    <property type="match status" value="1"/>
</dbReference>
<dbReference type="Gene3D" id="3.30.1360.40">
    <property type="match status" value="1"/>
</dbReference>
<dbReference type="Gene3D" id="1.10.132.20">
    <property type="entry name" value="Ribosome-recycling factor"/>
    <property type="match status" value="1"/>
</dbReference>
<dbReference type="HAMAP" id="MF_00040">
    <property type="entry name" value="RRF"/>
    <property type="match status" value="1"/>
</dbReference>
<dbReference type="InterPro" id="IPR002661">
    <property type="entry name" value="Ribosome_recyc_fac"/>
</dbReference>
<dbReference type="InterPro" id="IPR023584">
    <property type="entry name" value="Ribosome_recyc_fac_dom"/>
</dbReference>
<dbReference type="InterPro" id="IPR036191">
    <property type="entry name" value="RRF_sf"/>
</dbReference>
<dbReference type="NCBIfam" id="TIGR00496">
    <property type="entry name" value="frr"/>
    <property type="match status" value="1"/>
</dbReference>
<dbReference type="PANTHER" id="PTHR20982:SF3">
    <property type="entry name" value="MITOCHONDRIAL RIBOSOME RECYCLING FACTOR PSEUDO 1"/>
    <property type="match status" value="1"/>
</dbReference>
<dbReference type="PANTHER" id="PTHR20982">
    <property type="entry name" value="RIBOSOME RECYCLING FACTOR"/>
    <property type="match status" value="1"/>
</dbReference>
<dbReference type="Pfam" id="PF01765">
    <property type="entry name" value="RRF"/>
    <property type="match status" value="1"/>
</dbReference>
<dbReference type="SUPFAM" id="SSF55194">
    <property type="entry name" value="Ribosome recycling factor, RRF"/>
    <property type="match status" value="1"/>
</dbReference>
<gene>
    <name evidence="1" type="primary">frr</name>
    <name type="ordered locus">Mrad2831_3446</name>
</gene>
<feature type="chain" id="PRO_0000341021" description="Ribosome-recycling factor">
    <location>
        <begin position="1"/>
        <end position="187"/>
    </location>
</feature>
<comment type="function">
    <text evidence="1">Responsible for the release of ribosomes from messenger RNA at the termination of protein biosynthesis. May increase the efficiency of translation by recycling ribosomes from one round of translation to another.</text>
</comment>
<comment type="subcellular location">
    <subcellularLocation>
        <location evidence="1">Cytoplasm</location>
    </subcellularLocation>
</comment>
<comment type="similarity">
    <text evidence="1">Belongs to the RRF family.</text>
</comment>
<accession>B1LTQ4</accession>
<organism>
    <name type="scientific">Methylobacterium radiotolerans (strain ATCC 27329 / DSM 1819 / JCM 2831 / NBRC 15690 / NCIMB 10815 / 0-1)</name>
    <dbReference type="NCBI Taxonomy" id="426355"/>
    <lineage>
        <taxon>Bacteria</taxon>
        <taxon>Pseudomonadati</taxon>
        <taxon>Pseudomonadota</taxon>
        <taxon>Alphaproteobacteria</taxon>
        <taxon>Hyphomicrobiales</taxon>
        <taxon>Methylobacteriaceae</taxon>
        <taxon>Methylobacterium</taxon>
    </lineage>
</organism>